<gene>
    <name evidence="4" type="primary">pkk2A</name>
    <name evidence="6" type="ordered locus">Cgl0917</name>
</gene>
<proteinExistence type="inferred from homology"/>
<comment type="catalytic activity">
    <reaction evidence="1">
        <text>[phosphate](n) + GTP = [phosphate](n+1) + GDP</text>
        <dbReference type="Rhea" id="RHEA:55412"/>
        <dbReference type="Rhea" id="RHEA-COMP:9859"/>
        <dbReference type="Rhea" id="RHEA-COMP:14280"/>
        <dbReference type="ChEBI" id="CHEBI:16838"/>
        <dbReference type="ChEBI" id="CHEBI:37565"/>
        <dbReference type="ChEBI" id="CHEBI:58189"/>
    </reaction>
</comment>
<comment type="disruption phenotype">
    <text evidence="3">Deletion of the gene does not affect significantly the cellular polyP content.</text>
</comment>
<comment type="similarity">
    <text evidence="5">Belongs to the polyphosphate kinase 2 (PPK2) family. Class I subfamily.</text>
</comment>
<keyword id="KW-0418">Kinase</keyword>
<keyword id="KW-1185">Reference proteome</keyword>
<keyword id="KW-0808">Transferase</keyword>
<protein>
    <recommendedName>
        <fullName evidence="1">Putative GDP-polyphosphate phosphotransferase PKK2A</fullName>
        <ecNumber evidence="1">2.7.4.-</ecNumber>
    </recommendedName>
</protein>
<accession>Q8NRX4</accession>
<accession>Q6M6N1</accession>
<feature type="chain" id="PRO_0000442583" description="Putative GDP-polyphosphate phosphotransferase PKK2A">
    <location>
        <begin position="1"/>
        <end position="320"/>
    </location>
</feature>
<feature type="region of interest" description="Disordered" evidence="2">
    <location>
        <begin position="1"/>
        <end position="21"/>
    </location>
</feature>
<feature type="region of interest" description="Disordered" evidence="2">
    <location>
        <begin position="246"/>
        <end position="267"/>
    </location>
</feature>
<feature type="region of interest" description="Disordered" evidence="2">
    <location>
        <begin position="281"/>
        <end position="320"/>
    </location>
</feature>
<feature type="compositionally biased region" description="Basic and acidic residues" evidence="2">
    <location>
        <begin position="12"/>
        <end position="21"/>
    </location>
</feature>
<feature type="compositionally biased region" description="Basic and acidic residues" evidence="2">
    <location>
        <begin position="281"/>
        <end position="290"/>
    </location>
</feature>
<name>PK21A_CORGL</name>
<reference key="1">
    <citation type="journal article" date="2003" name="Appl. Microbiol. Biotechnol.">
        <title>The Corynebacterium glutamicum genome: features and impacts on biotechnological processes.</title>
        <authorList>
            <person name="Ikeda M."/>
            <person name="Nakagawa S."/>
        </authorList>
    </citation>
    <scope>NUCLEOTIDE SEQUENCE [LARGE SCALE GENOMIC DNA]</scope>
    <source>
        <strain>ATCC 13032 / DSM 20300 / JCM 1318 / BCRC 11384 / CCUG 27702 / LMG 3730 / NBRC 12168 / NCIMB 10025 / NRRL B-2784 / 534</strain>
    </source>
</reference>
<reference key="2">
    <citation type="journal article" date="2007" name="Appl. Environ. Microbiol.">
        <title>NCgl2620 encodes a class II polyphosphate kinase in Corynebacterium glutamicum.</title>
        <authorList>
            <person name="Lindner S.N."/>
            <person name="Vidaurre D."/>
            <person name="Willbold S."/>
            <person name="Schoberth S.M."/>
            <person name="Wendisch V.F."/>
        </authorList>
    </citation>
    <scope>DISRUPTION PHENOTYPE</scope>
    <source>
        <strain>ATCC 13032 / DSM 20300 / JCM 1318 / BCRC 11384 / CCUG 27702 / LMG 3730 / NBRC 12168 / NCIMB 10025 / NRRL B-2784 / 534</strain>
    </source>
</reference>
<sequence>MRKKKDGQNLPDFRKNPPKLDKKAYEKELKRLQAELVDLQQWVVETGARVVIVMEGRDAAGKGSAIKRITQYLNPRSARIEALPTPNSREKGQWYFQRYIEKLPTAGEIVIFDRSWYNRAGVERVMGFCTSQEYRRFLHQAPIFERLLVEDGIHLRKYWFSVSDEEQIERFEDRLSDPLRRWKLSPMDLQSITRWEDYSRAKDEMFIHTDIPSAPWYTVESEDKKRSRINVISHLLSTIPYEKIDRPLPEIPHRPDSESDYVRPPRDEFRYVPDVAAHLEEERIKKEEKAKKAKKPAKAAGKNSDKQKSSGGKGKKKSKK</sequence>
<organism>
    <name type="scientific">Corynebacterium glutamicum (strain ATCC 13032 / DSM 20300 / JCM 1318 / BCRC 11384 / CCUG 27702 / LMG 3730 / NBRC 12168 / NCIMB 10025 / NRRL B-2784 / 534)</name>
    <dbReference type="NCBI Taxonomy" id="196627"/>
    <lineage>
        <taxon>Bacteria</taxon>
        <taxon>Bacillati</taxon>
        <taxon>Actinomycetota</taxon>
        <taxon>Actinomycetes</taxon>
        <taxon>Mycobacteriales</taxon>
        <taxon>Corynebacteriaceae</taxon>
        <taxon>Corynebacterium</taxon>
    </lineage>
</organism>
<evidence type="ECO:0000250" key="1">
    <source>
        <dbReference type="UniProtKB" id="O05877"/>
    </source>
</evidence>
<evidence type="ECO:0000256" key="2">
    <source>
        <dbReference type="SAM" id="MobiDB-lite"/>
    </source>
</evidence>
<evidence type="ECO:0000269" key="3">
    <source>
    </source>
</evidence>
<evidence type="ECO:0000303" key="4">
    <source>
    </source>
</evidence>
<evidence type="ECO:0000305" key="5"/>
<evidence type="ECO:0000312" key="6">
    <source>
        <dbReference type="EMBL" id="BAB98310.1"/>
    </source>
</evidence>
<dbReference type="EC" id="2.7.4.-" evidence="1"/>
<dbReference type="EMBL" id="BA000036">
    <property type="protein sequence ID" value="BAB98310.1"/>
    <property type="molecule type" value="Genomic_DNA"/>
</dbReference>
<dbReference type="RefSeq" id="NP_600145.1">
    <property type="nucleotide sequence ID" value="NC_003450.3"/>
</dbReference>
<dbReference type="SMR" id="Q8NRX4"/>
<dbReference type="STRING" id="196627.cg1046"/>
<dbReference type="KEGG" id="cgb:cg1046"/>
<dbReference type="KEGG" id="cgl:Cgl0917"/>
<dbReference type="PATRIC" id="fig|196627.13.peg.903"/>
<dbReference type="eggNOG" id="COG2326">
    <property type="taxonomic scope" value="Bacteria"/>
</dbReference>
<dbReference type="HOGENOM" id="CLU_048699_3_0_11"/>
<dbReference type="OrthoDB" id="9775224at2"/>
<dbReference type="BioCyc" id="CORYNE:G18NG-10487-MONOMER"/>
<dbReference type="Proteomes" id="UP000000582">
    <property type="component" value="Chromosome"/>
</dbReference>
<dbReference type="GO" id="GO:0008976">
    <property type="term" value="F:polyphosphate kinase activity"/>
    <property type="evidence" value="ECO:0007669"/>
    <property type="project" value="UniProtKB-EC"/>
</dbReference>
<dbReference type="GO" id="GO:0006793">
    <property type="term" value="P:phosphorus metabolic process"/>
    <property type="evidence" value="ECO:0007669"/>
    <property type="project" value="InterPro"/>
</dbReference>
<dbReference type="Gene3D" id="3.40.50.300">
    <property type="entry name" value="P-loop containing nucleotide triphosphate hydrolases"/>
    <property type="match status" value="1"/>
</dbReference>
<dbReference type="InterPro" id="IPR027417">
    <property type="entry name" value="P-loop_NTPase"/>
</dbReference>
<dbReference type="InterPro" id="IPR016898">
    <property type="entry name" value="Polyphosphate_phosphotransfera"/>
</dbReference>
<dbReference type="InterPro" id="IPR022488">
    <property type="entry name" value="PPK2-related"/>
</dbReference>
<dbReference type="InterPro" id="IPR022486">
    <property type="entry name" value="PPK2_PA0141"/>
</dbReference>
<dbReference type="NCBIfam" id="TIGR03707">
    <property type="entry name" value="PPK2_P_aer"/>
    <property type="match status" value="1"/>
</dbReference>
<dbReference type="PANTHER" id="PTHR34383:SF1">
    <property type="entry name" value="ADP-POLYPHOSPHATE PHOSPHOTRANSFERASE"/>
    <property type="match status" value="1"/>
</dbReference>
<dbReference type="PANTHER" id="PTHR34383">
    <property type="entry name" value="POLYPHOSPHATE:AMP PHOSPHOTRANSFERASE-RELATED"/>
    <property type="match status" value="1"/>
</dbReference>
<dbReference type="Pfam" id="PF03976">
    <property type="entry name" value="PPK2"/>
    <property type="match status" value="1"/>
</dbReference>
<dbReference type="PIRSF" id="PIRSF028756">
    <property type="entry name" value="PPK2_prd"/>
    <property type="match status" value="1"/>
</dbReference>
<dbReference type="SUPFAM" id="SSF52540">
    <property type="entry name" value="P-loop containing nucleoside triphosphate hydrolases"/>
    <property type="match status" value="1"/>
</dbReference>